<keyword id="KW-0240">DNA-directed RNA polymerase</keyword>
<keyword id="KW-0479">Metal-binding</keyword>
<keyword id="KW-0539">Nucleus</keyword>
<keyword id="KW-1185">Reference proteome</keyword>
<keyword id="KW-0804">Transcription</keyword>
<keyword id="KW-0862">Zinc</keyword>
<keyword id="KW-0863">Zinc-finger</keyword>
<feature type="chain" id="PRO_0000121471" description="DNA-directed RNA polymerase II subunit RPB9">
    <location>
        <begin position="1"/>
        <end position="122"/>
    </location>
</feature>
<feature type="zinc finger region" description="C4-type" evidence="3">
    <location>
        <begin position="7"/>
        <end position="32"/>
    </location>
</feature>
<feature type="zinc finger region" description="TFIIS-type" evidence="4">
    <location>
        <begin position="71"/>
        <end position="111"/>
    </location>
</feature>
<feature type="binding site" evidence="5">
    <location>
        <position position="7"/>
    </location>
    <ligand>
        <name>Zn(2+)</name>
        <dbReference type="ChEBI" id="CHEBI:29105"/>
        <label>1</label>
    </ligand>
</feature>
<feature type="binding site" evidence="5">
    <location>
        <position position="10"/>
    </location>
    <ligand>
        <name>Zn(2+)</name>
        <dbReference type="ChEBI" id="CHEBI:29105"/>
        <label>1</label>
    </ligand>
</feature>
<feature type="binding site" evidence="5">
    <location>
        <position position="29"/>
    </location>
    <ligand>
        <name>Zn(2+)</name>
        <dbReference type="ChEBI" id="CHEBI:29105"/>
        <label>1</label>
    </ligand>
</feature>
<feature type="binding site" evidence="5">
    <location>
        <position position="32"/>
    </location>
    <ligand>
        <name>Zn(2+)</name>
        <dbReference type="ChEBI" id="CHEBI:29105"/>
        <label>1</label>
    </ligand>
</feature>
<feature type="binding site" evidence="4">
    <location>
        <position position="75"/>
    </location>
    <ligand>
        <name>Zn(2+)</name>
        <dbReference type="ChEBI" id="CHEBI:29105"/>
        <label>2</label>
    </ligand>
</feature>
<feature type="binding site" evidence="4">
    <location>
        <position position="78"/>
    </location>
    <ligand>
        <name>Zn(2+)</name>
        <dbReference type="ChEBI" id="CHEBI:29105"/>
        <label>2</label>
    </ligand>
</feature>
<feature type="binding site" evidence="4">
    <location>
        <position position="103"/>
    </location>
    <ligand>
        <name>Zn(2+)</name>
        <dbReference type="ChEBI" id="CHEBI:29105"/>
        <label>2</label>
    </ligand>
</feature>
<feature type="binding site" evidence="4">
    <location>
        <position position="106"/>
    </location>
    <ligand>
        <name>Zn(2+)</name>
        <dbReference type="ChEBI" id="CHEBI:29105"/>
        <label>2</label>
    </ligand>
</feature>
<organism>
    <name type="scientific">Candida glabrata (strain ATCC 2001 / BCRC 20586 / JCM 3761 / NBRC 0622 / NRRL Y-65 / CBS 138)</name>
    <name type="common">Yeast</name>
    <name type="synonym">Nakaseomyces glabratus</name>
    <dbReference type="NCBI Taxonomy" id="284593"/>
    <lineage>
        <taxon>Eukaryota</taxon>
        <taxon>Fungi</taxon>
        <taxon>Dikarya</taxon>
        <taxon>Ascomycota</taxon>
        <taxon>Saccharomycotina</taxon>
        <taxon>Saccharomycetes</taxon>
        <taxon>Saccharomycetales</taxon>
        <taxon>Saccharomycetaceae</taxon>
        <taxon>Nakaseomyces</taxon>
    </lineage>
</organism>
<name>RPB9_CANGA</name>
<evidence type="ECO:0000250" key="1"/>
<evidence type="ECO:0000250" key="2">
    <source>
        <dbReference type="UniProtKB" id="P32529"/>
    </source>
</evidence>
<evidence type="ECO:0000255" key="3"/>
<evidence type="ECO:0000255" key="4">
    <source>
        <dbReference type="PROSITE-ProRule" id="PRU00472"/>
    </source>
</evidence>
<evidence type="ECO:0000255" key="5">
    <source>
        <dbReference type="PROSITE-ProRule" id="PRU10145"/>
    </source>
</evidence>
<evidence type="ECO:0000305" key="6"/>
<gene>
    <name type="primary">RPB9</name>
    <name type="ordered locus">CAGL0H03509g</name>
</gene>
<sequence>MTTFRFCRDCNNMLYPREDKENNRLLFECRTCSYIEEAGSPLVYRHELITNIGETAGVVQDIGSDPTLPRSDRECPKCHSRENVFFQSQQRRKDTSMVLFFVCLACSHIFTSDQKNKRTQFS</sequence>
<accession>Q6FS48</accession>
<protein>
    <recommendedName>
        <fullName>DNA-directed RNA polymerase II subunit RPB9</fullName>
        <shortName>RNA polymerase II subunit B9</shortName>
    </recommendedName>
    <alternativeName>
        <fullName>DNA-directed RNA polymerase II subunit 9</fullName>
    </alternativeName>
</protein>
<comment type="function">
    <text evidence="1">DNA-dependent RNA polymerase catalyzes the transcription of DNA into RNA using the four ribonucleoside triphosphates as substrates. Component of RNA polymerase II which synthesizes mRNA precursors and many functional non-coding RNAs. Pol II is the central component of the basal RNA polymerase II transcription machinery. It is composed of mobile elements that move relative to each other. RPB9 is part of the upper jaw surrounding the central large cleft and thought to grab the incoming DNA template. Involved in the regulation of transcription elongation (By similarity).</text>
</comment>
<comment type="subunit">
    <text evidence="1">Component of the RNA polymerase II (Pol II) complex consisting of 12 subunits.</text>
</comment>
<comment type="subcellular location">
    <subcellularLocation>
        <location evidence="2">Nucleus</location>
        <location evidence="2">Nucleolus</location>
    </subcellularLocation>
</comment>
<comment type="similarity">
    <text evidence="6">Belongs to the archaeal RpoM/eukaryotic RPA12/RPB9/RPC11 RNA polymerase family.</text>
</comment>
<dbReference type="EMBL" id="CR380954">
    <property type="protein sequence ID" value="CAG59879.1"/>
    <property type="molecule type" value="Genomic_DNA"/>
</dbReference>
<dbReference type="RefSeq" id="XP_446946.1">
    <property type="nucleotide sequence ID" value="XM_446946.1"/>
</dbReference>
<dbReference type="SMR" id="Q6FS48"/>
<dbReference type="FunCoup" id="Q6FS48">
    <property type="interactions" value="413"/>
</dbReference>
<dbReference type="STRING" id="284593.Q6FS48"/>
<dbReference type="EnsemblFungi" id="CAGL0H03509g-T">
    <property type="protein sequence ID" value="CAGL0H03509g-T-p1"/>
    <property type="gene ID" value="CAGL0H03509g"/>
</dbReference>
<dbReference type="KEGG" id="cgr:2888695"/>
<dbReference type="CGD" id="CAL0131596">
    <property type="gene designation" value="CAGL0H03509g"/>
</dbReference>
<dbReference type="VEuPathDB" id="FungiDB:B1J91_H03509g"/>
<dbReference type="VEuPathDB" id="FungiDB:CAGL0H03509g"/>
<dbReference type="eggNOG" id="KOG2691">
    <property type="taxonomic scope" value="Eukaryota"/>
</dbReference>
<dbReference type="HOGENOM" id="CLU_093932_0_1_1"/>
<dbReference type="InParanoid" id="Q6FS48"/>
<dbReference type="OMA" id="DTSMVLF"/>
<dbReference type="Proteomes" id="UP000002428">
    <property type="component" value="Chromosome H"/>
</dbReference>
<dbReference type="GO" id="GO:0005730">
    <property type="term" value="C:nucleolus"/>
    <property type="evidence" value="ECO:0007669"/>
    <property type="project" value="UniProtKB-SubCell"/>
</dbReference>
<dbReference type="GO" id="GO:0005665">
    <property type="term" value="C:RNA polymerase II, core complex"/>
    <property type="evidence" value="ECO:0007669"/>
    <property type="project" value="EnsemblFungi"/>
</dbReference>
<dbReference type="GO" id="GO:0003899">
    <property type="term" value="F:DNA-directed RNA polymerase activity"/>
    <property type="evidence" value="ECO:0007669"/>
    <property type="project" value="InterPro"/>
</dbReference>
<dbReference type="GO" id="GO:0003676">
    <property type="term" value="F:nucleic acid binding"/>
    <property type="evidence" value="ECO:0007669"/>
    <property type="project" value="InterPro"/>
</dbReference>
<dbReference type="GO" id="GO:0003968">
    <property type="term" value="F:RNA-directed RNA polymerase activity"/>
    <property type="evidence" value="ECO:0007669"/>
    <property type="project" value="EnsemblFungi"/>
</dbReference>
<dbReference type="GO" id="GO:0008270">
    <property type="term" value="F:zinc ion binding"/>
    <property type="evidence" value="ECO:0007669"/>
    <property type="project" value="UniProtKB-KW"/>
</dbReference>
<dbReference type="GO" id="GO:0001193">
    <property type="term" value="P:maintenance of transcriptional fidelity during transcription elongation by RNA polymerase II"/>
    <property type="evidence" value="ECO:0007669"/>
    <property type="project" value="EnsemblFungi"/>
</dbReference>
<dbReference type="GO" id="GO:0006367">
    <property type="term" value="P:transcription initiation at RNA polymerase II promoter"/>
    <property type="evidence" value="ECO:0007669"/>
    <property type="project" value="EnsemblFungi"/>
</dbReference>
<dbReference type="GO" id="GO:0006283">
    <property type="term" value="P:transcription-coupled nucleotide-excision repair"/>
    <property type="evidence" value="ECO:0007669"/>
    <property type="project" value="EnsemblFungi"/>
</dbReference>
<dbReference type="CDD" id="cd10508">
    <property type="entry name" value="Zn-ribbon_RPB9"/>
    <property type="match status" value="1"/>
</dbReference>
<dbReference type="FunFam" id="2.20.25.10:FF:000008">
    <property type="entry name" value="DNA-directed RNA polymerase II subunit RPB9"/>
    <property type="match status" value="1"/>
</dbReference>
<dbReference type="FunFam" id="2.20.25.10:FF:000016">
    <property type="entry name" value="DNA-directed RNA polymerase II subunit RPB9"/>
    <property type="match status" value="1"/>
</dbReference>
<dbReference type="Gene3D" id="2.20.25.10">
    <property type="match status" value="2"/>
</dbReference>
<dbReference type="InterPro" id="IPR019761">
    <property type="entry name" value="DNA-dir_RNA_pol-M_15_CS"/>
</dbReference>
<dbReference type="InterPro" id="IPR012164">
    <property type="entry name" value="Rpa12/Rpb9/Rpc10/TFS"/>
</dbReference>
<dbReference type="InterPro" id="IPR001529">
    <property type="entry name" value="Zn_ribbon_RPB9"/>
</dbReference>
<dbReference type="InterPro" id="IPR034012">
    <property type="entry name" value="Zn_ribbon_RPB9_C"/>
</dbReference>
<dbReference type="InterPro" id="IPR001222">
    <property type="entry name" value="Znf_TFIIS"/>
</dbReference>
<dbReference type="PANTHER" id="PTHR11239">
    <property type="entry name" value="DNA-DIRECTED RNA POLYMERASE"/>
    <property type="match status" value="1"/>
</dbReference>
<dbReference type="PANTHER" id="PTHR11239:SF1">
    <property type="entry name" value="DNA-DIRECTED RNA POLYMERASE II SUBUNIT RPB9"/>
    <property type="match status" value="1"/>
</dbReference>
<dbReference type="Pfam" id="PF02150">
    <property type="entry name" value="Zn_ribbon_RPB9"/>
    <property type="match status" value="1"/>
</dbReference>
<dbReference type="Pfam" id="PF01096">
    <property type="entry name" value="Zn_ribbon_TFIIS"/>
    <property type="match status" value="1"/>
</dbReference>
<dbReference type="PIRSF" id="PIRSF005586">
    <property type="entry name" value="RNApol_RpoM"/>
    <property type="match status" value="1"/>
</dbReference>
<dbReference type="SMART" id="SM00661">
    <property type="entry name" value="RPOL9"/>
    <property type="match status" value="1"/>
</dbReference>
<dbReference type="SMART" id="SM00440">
    <property type="entry name" value="ZnF_C2C2"/>
    <property type="match status" value="1"/>
</dbReference>
<dbReference type="SUPFAM" id="SSF57783">
    <property type="entry name" value="Zinc beta-ribbon"/>
    <property type="match status" value="2"/>
</dbReference>
<dbReference type="PROSITE" id="PS01030">
    <property type="entry name" value="RNA_POL_M_15KD"/>
    <property type="match status" value="1"/>
</dbReference>
<dbReference type="PROSITE" id="PS00466">
    <property type="entry name" value="ZF_TFIIS_1"/>
    <property type="match status" value="1"/>
</dbReference>
<dbReference type="PROSITE" id="PS51133">
    <property type="entry name" value="ZF_TFIIS_2"/>
    <property type="match status" value="1"/>
</dbReference>
<proteinExistence type="inferred from homology"/>
<reference key="1">
    <citation type="journal article" date="2004" name="Nature">
        <title>Genome evolution in yeasts.</title>
        <authorList>
            <person name="Dujon B."/>
            <person name="Sherman D."/>
            <person name="Fischer G."/>
            <person name="Durrens P."/>
            <person name="Casaregola S."/>
            <person name="Lafontaine I."/>
            <person name="de Montigny J."/>
            <person name="Marck C."/>
            <person name="Neuveglise C."/>
            <person name="Talla E."/>
            <person name="Goffard N."/>
            <person name="Frangeul L."/>
            <person name="Aigle M."/>
            <person name="Anthouard V."/>
            <person name="Babour A."/>
            <person name="Barbe V."/>
            <person name="Barnay S."/>
            <person name="Blanchin S."/>
            <person name="Beckerich J.-M."/>
            <person name="Beyne E."/>
            <person name="Bleykasten C."/>
            <person name="Boisrame A."/>
            <person name="Boyer J."/>
            <person name="Cattolico L."/>
            <person name="Confanioleri F."/>
            <person name="de Daruvar A."/>
            <person name="Despons L."/>
            <person name="Fabre E."/>
            <person name="Fairhead C."/>
            <person name="Ferry-Dumazet H."/>
            <person name="Groppi A."/>
            <person name="Hantraye F."/>
            <person name="Hennequin C."/>
            <person name="Jauniaux N."/>
            <person name="Joyet P."/>
            <person name="Kachouri R."/>
            <person name="Kerrest A."/>
            <person name="Koszul R."/>
            <person name="Lemaire M."/>
            <person name="Lesur I."/>
            <person name="Ma L."/>
            <person name="Muller H."/>
            <person name="Nicaud J.-M."/>
            <person name="Nikolski M."/>
            <person name="Oztas S."/>
            <person name="Ozier-Kalogeropoulos O."/>
            <person name="Pellenz S."/>
            <person name="Potier S."/>
            <person name="Richard G.-F."/>
            <person name="Straub M.-L."/>
            <person name="Suleau A."/>
            <person name="Swennen D."/>
            <person name="Tekaia F."/>
            <person name="Wesolowski-Louvel M."/>
            <person name="Westhof E."/>
            <person name="Wirth B."/>
            <person name="Zeniou-Meyer M."/>
            <person name="Zivanovic Y."/>
            <person name="Bolotin-Fukuhara M."/>
            <person name="Thierry A."/>
            <person name="Bouchier C."/>
            <person name="Caudron B."/>
            <person name="Scarpelli C."/>
            <person name="Gaillardin C."/>
            <person name="Weissenbach J."/>
            <person name="Wincker P."/>
            <person name="Souciet J.-L."/>
        </authorList>
    </citation>
    <scope>NUCLEOTIDE SEQUENCE [LARGE SCALE GENOMIC DNA]</scope>
    <source>
        <strain>ATCC 2001 / BCRC 20586 / JCM 3761 / NBRC 0622 / NRRL Y-65 / CBS 138</strain>
    </source>
</reference>